<feature type="signal peptide" evidence="1">
    <location>
        <begin position="1"/>
        <end position="22"/>
    </location>
</feature>
<feature type="chain" id="PRO_0000013885" description="Uncharacterized protein YfeY">
    <location>
        <begin position="23"/>
        <end position="191"/>
    </location>
</feature>
<feature type="strand" evidence="2">
    <location>
        <begin position="53"/>
        <end position="56"/>
    </location>
</feature>
<feature type="helix" evidence="2">
    <location>
        <begin position="57"/>
        <end position="63"/>
    </location>
</feature>
<feature type="strand" evidence="2">
    <location>
        <begin position="69"/>
        <end position="77"/>
    </location>
</feature>
<feature type="strand" evidence="2">
    <location>
        <begin position="80"/>
        <end position="89"/>
    </location>
</feature>
<feature type="strand" evidence="2">
    <location>
        <begin position="92"/>
        <end position="98"/>
    </location>
</feature>
<feature type="strand" evidence="2">
    <location>
        <begin position="106"/>
        <end position="109"/>
    </location>
</feature>
<feature type="helix" evidence="2">
    <location>
        <begin position="126"/>
        <end position="129"/>
    </location>
</feature>
<feature type="turn" evidence="2">
    <location>
        <begin position="134"/>
        <end position="136"/>
    </location>
</feature>
<feature type="strand" evidence="2">
    <location>
        <begin position="137"/>
        <end position="139"/>
    </location>
</feature>
<feature type="strand" evidence="2">
    <location>
        <begin position="148"/>
        <end position="151"/>
    </location>
</feature>
<feature type="strand" evidence="2">
    <location>
        <begin position="156"/>
        <end position="163"/>
    </location>
</feature>
<feature type="helix" evidence="2">
    <location>
        <begin position="176"/>
        <end position="179"/>
    </location>
</feature>
<feature type="strand" evidence="2">
    <location>
        <begin position="183"/>
        <end position="190"/>
    </location>
</feature>
<evidence type="ECO:0000255" key="1"/>
<evidence type="ECO:0007829" key="2">
    <source>
        <dbReference type="PDB" id="2QZB"/>
    </source>
</evidence>
<gene>
    <name type="primary">yfeY</name>
    <name type="ordered locus">b2432</name>
    <name type="ordered locus">JW2425</name>
</gene>
<protein>
    <recommendedName>
        <fullName>Uncharacterized protein YfeY</fullName>
    </recommendedName>
</protein>
<organism>
    <name type="scientific">Escherichia coli (strain K12)</name>
    <dbReference type="NCBI Taxonomy" id="83333"/>
    <lineage>
        <taxon>Bacteria</taxon>
        <taxon>Pseudomonadati</taxon>
        <taxon>Pseudomonadota</taxon>
        <taxon>Gammaproteobacteria</taxon>
        <taxon>Enterobacterales</taxon>
        <taxon>Enterobacteriaceae</taxon>
        <taxon>Escherichia</taxon>
    </lineage>
</organism>
<name>YFEY_ECOLI</name>
<sequence>MKSLRLMLCAMPLMLTGCSTMSSVNWSAANPWNWFGSSTKVSEQGVGELTASTPLQEQAIADALDGDYRLRSGMKTANGNVVRFFEVMKGDNVAMVINGDQGTISRIDVLDSDIPADTGVKIGTPFSDLYSKAFGNCQKADGDDNRAVECKAEGSQHISYQFSGEWRGPEGLMPSDDTLKNWKVSKIIWRR</sequence>
<keyword id="KW-0002">3D-structure</keyword>
<keyword id="KW-1185">Reference proteome</keyword>
<keyword id="KW-0732">Signal</keyword>
<proteinExistence type="evidence at protein level"/>
<accession>P76537</accession>
<accession>Q2MAJ4</accession>
<accession>Q47564</accession>
<dbReference type="EMBL" id="U00096">
    <property type="protein sequence ID" value="AAC75485.1"/>
    <property type="molecule type" value="Genomic_DNA"/>
</dbReference>
<dbReference type="EMBL" id="AP009048">
    <property type="protein sequence ID" value="BAE76712.1"/>
    <property type="molecule type" value="Genomic_DNA"/>
</dbReference>
<dbReference type="EMBL" id="D21150">
    <property type="protein sequence ID" value="BAA04686.1"/>
    <property type="molecule type" value="Genomic_DNA"/>
</dbReference>
<dbReference type="PIR" id="G65017">
    <property type="entry name" value="G65017"/>
</dbReference>
<dbReference type="RefSeq" id="NP_416927.1">
    <property type="nucleotide sequence ID" value="NC_000913.3"/>
</dbReference>
<dbReference type="RefSeq" id="WP_000838944.1">
    <property type="nucleotide sequence ID" value="NZ_LN832404.1"/>
</dbReference>
<dbReference type="PDB" id="2QZB">
    <property type="method" value="X-ray"/>
    <property type="resolution" value="2.10 A"/>
    <property type="chains" value="A/B=28-191"/>
</dbReference>
<dbReference type="PDBsum" id="2QZB"/>
<dbReference type="SMR" id="P76537"/>
<dbReference type="BioGRID" id="4260754">
    <property type="interactions" value="13"/>
</dbReference>
<dbReference type="FunCoup" id="P76537">
    <property type="interactions" value="8"/>
</dbReference>
<dbReference type="STRING" id="511145.b2432"/>
<dbReference type="jPOST" id="P76537"/>
<dbReference type="PaxDb" id="511145-b2432"/>
<dbReference type="EnsemblBacteria" id="AAC75485">
    <property type="protein sequence ID" value="AAC75485"/>
    <property type="gene ID" value="b2432"/>
</dbReference>
<dbReference type="GeneID" id="946919"/>
<dbReference type="KEGG" id="ecj:JW2425"/>
<dbReference type="KEGG" id="eco:b2432"/>
<dbReference type="KEGG" id="ecoc:C3026_13510"/>
<dbReference type="PATRIC" id="fig|1411691.4.peg.4299"/>
<dbReference type="EchoBASE" id="EB3918"/>
<dbReference type="eggNOG" id="ENOG502ZC5Z">
    <property type="taxonomic scope" value="Bacteria"/>
</dbReference>
<dbReference type="HOGENOM" id="CLU_117171_0_0_6"/>
<dbReference type="InParanoid" id="P76537"/>
<dbReference type="OMA" id="SPFNWFG"/>
<dbReference type="OrthoDB" id="5622706at2"/>
<dbReference type="PhylomeDB" id="P76537"/>
<dbReference type="BioCyc" id="EcoCyc:G7267-MONOMER"/>
<dbReference type="EvolutionaryTrace" id="P76537"/>
<dbReference type="PRO" id="PR:P76537"/>
<dbReference type="Proteomes" id="UP000000625">
    <property type="component" value="Chromosome"/>
</dbReference>
<dbReference type="Gene3D" id="2.60.460.10">
    <property type="entry name" value="protein yfey like domain"/>
    <property type="match status" value="1"/>
</dbReference>
<dbReference type="InterPro" id="IPR010938">
    <property type="entry name" value="DUF1131"/>
</dbReference>
<dbReference type="InterPro" id="IPR038714">
    <property type="entry name" value="YfeY-like_sf"/>
</dbReference>
<dbReference type="NCBIfam" id="NF007990">
    <property type="entry name" value="PRK10718.1"/>
    <property type="match status" value="1"/>
</dbReference>
<dbReference type="Pfam" id="PF06572">
    <property type="entry name" value="DUF1131"/>
    <property type="match status" value="1"/>
</dbReference>
<dbReference type="PROSITE" id="PS51257">
    <property type="entry name" value="PROKAR_LIPOPROTEIN"/>
    <property type="match status" value="1"/>
</dbReference>
<reference key="1">
    <citation type="journal article" date="1997" name="Science">
        <title>The complete genome sequence of Escherichia coli K-12.</title>
        <authorList>
            <person name="Blattner F.R."/>
            <person name="Plunkett G. III"/>
            <person name="Bloch C.A."/>
            <person name="Perna N.T."/>
            <person name="Burland V."/>
            <person name="Riley M."/>
            <person name="Collado-Vides J."/>
            <person name="Glasner J.D."/>
            <person name="Rode C.K."/>
            <person name="Mayhew G.F."/>
            <person name="Gregor J."/>
            <person name="Davis N.W."/>
            <person name="Kirkpatrick H.A."/>
            <person name="Goeden M.A."/>
            <person name="Rose D.J."/>
            <person name="Mau B."/>
            <person name="Shao Y."/>
        </authorList>
    </citation>
    <scope>NUCLEOTIDE SEQUENCE [LARGE SCALE GENOMIC DNA]</scope>
    <source>
        <strain>K12 / MG1655 / ATCC 47076</strain>
    </source>
</reference>
<reference key="2">
    <citation type="journal article" date="2006" name="Mol. Syst. Biol.">
        <title>Highly accurate genome sequences of Escherichia coli K-12 strains MG1655 and W3110.</title>
        <authorList>
            <person name="Hayashi K."/>
            <person name="Morooka N."/>
            <person name="Yamamoto Y."/>
            <person name="Fujita K."/>
            <person name="Isono K."/>
            <person name="Choi S."/>
            <person name="Ohtsubo E."/>
            <person name="Baba T."/>
            <person name="Wanner B.L."/>
            <person name="Mori H."/>
            <person name="Horiuchi T."/>
        </authorList>
    </citation>
    <scope>NUCLEOTIDE SEQUENCE [LARGE SCALE GENOMIC DNA]</scope>
    <source>
        <strain>K12 / W3110 / ATCC 27325 / DSM 5911</strain>
    </source>
</reference>
<reference key="3">
    <citation type="journal article" date="1994" name="Biosci. Biotechnol. Biochem.">
        <title>Analysis of products of the Escherichia coli genomic genes and regulation of their expressions: an applicable procedure for genomic analysis of other microorganisms.</title>
        <authorList>
            <person name="Talukder A.A."/>
            <person name="Yanai S."/>
            <person name="Yamada M."/>
        </authorList>
    </citation>
    <scope>NUCLEOTIDE SEQUENCE [GENOMIC DNA] OF 74-100</scope>
    <source>
        <strain>K12 / W3110 / ATCC 27325 / DSM 5911</strain>
    </source>
</reference>